<evidence type="ECO:0000255" key="1">
    <source>
        <dbReference type="PROSITE-ProRule" id="PRU00238"/>
    </source>
</evidence>
<organism>
    <name type="scientific">Ascaris suum</name>
    <name type="common">Pig roundworm</name>
    <name type="synonym">Ascaris lumbricoides</name>
    <dbReference type="NCBI Taxonomy" id="6253"/>
    <lineage>
        <taxon>Eukaryota</taxon>
        <taxon>Metazoa</taxon>
        <taxon>Ecdysozoa</taxon>
        <taxon>Nematoda</taxon>
        <taxon>Chromadorea</taxon>
        <taxon>Rhabditida</taxon>
        <taxon>Spirurina</taxon>
        <taxon>Ascaridomorpha</taxon>
        <taxon>Ascaridoidea</taxon>
        <taxon>Ascarididae</taxon>
        <taxon>Ascaris</taxon>
    </lineage>
</organism>
<keyword id="KW-0963">Cytoplasm</keyword>
<keyword id="KW-0903">Direct protein sequencing</keyword>
<keyword id="KW-1015">Disulfide bond</keyword>
<keyword id="KW-0349">Heme</keyword>
<keyword id="KW-0408">Iron</keyword>
<keyword id="KW-0479">Metal-binding</keyword>
<keyword id="KW-0561">Oxygen transport</keyword>
<keyword id="KW-0813">Transport</keyword>
<reference key="1">
    <citation type="journal article" date="1994" name="J. Biol. Chem.">
        <title>Structural characterization of an Ascaris myoglobin.</title>
        <authorList>
            <person name="Blaxter M.L."/>
            <person name="Vanfleteren J.R."/>
            <person name="Xia J."/>
            <person name="Moens L."/>
        </authorList>
    </citation>
    <scope>NUCLEOTIDE SEQUENCE [MRNA]</scope>
    <scope>PARTIAL PROTEIN SEQUENCE</scope>
    <source>
        <tissue>Body wall muscle</tissue>
    </source>
</reference>
<proteinExistence type="evidence at protein level"/>
<protein>
    <recommendedName>
        <fullName>Myoglobin</fullName>
    </recommendedName>
    <alternativeName>
        <fullName>Globin, body wall isoform</fullName>
    </alternativeName>
</protein>
<accession>P49672</accession>
<sequence length="153" mass="17454">MATACVKSLESVQCGTCEKTIANGTEFYALLFDKHPDLRHYFKGNENLTGADVKKSDHFKKQGQRLLLACHVLAHLENDPASFKAYAREIVDPHLRMSVHLEPKLWSEFWPIWLDYLSTKESVDDATKNAWLALGKKFSDECLDHLKNLGQPH</sequence>
<dbReference type="EMBL" id="U17337">
    <property type="protein sequence ID" value="AAA64695.1"/>
    <property type="molecule type" value="mRNA"/>
</dbReference>
<dbReference type="PIR" id="A55139">
    <property type="entry name" value="A55139"/>
</dbReference>
<dbReference type="SMR" id="P49672"/>
<dbReference type="GO" id="GO:0005737">
    <property type="term" value="C:cytoplasm"/>
    <property type="evidence" value="ECO:0007669"/>
    <property type="project" value="UniProtKB-SubCell"/>
</dbReference>
<dbReference type="GO" id="GO:0020037">
    <property type="term" value="F:heme binding"/>
    <property type="evidence" value="ECO:0007669"/>
    <property type="project" value="InterPro"/>
</dbReference>
<dbReference type="GO" id="GO:0005506">
    <property type="term" value="F:iron ion binding"/>
    <property type="evidence" value="ECO:0007669"/>
    <property type="project" value="InterPro"/>
</dbReference>
<dbReference type="GO" id="GO:0019825">
    <property type="term" value="F:oxygen binding"/>
    <property type="evidence" value="ECO:0007669"/>
    <property type="project" value="InterPro"/>
</dbReference>
<dbReference type="GO" id="GO:0005344">
    <property type="term" value="F:oxygen carrier activity"/>
    <property type="evidence" value="ECO:0007669"/>
    <property type="project" value="UniProtKB-KW"/>
</dbReference>
<dbReference type="CDD" id="cd01040">
    <property type="entry name" value="Mb-like"/>
    <property type="match status" value="1"/>
</dbReference>
<dbReference type="Gene3D" id="1.10.490.10">
    <property type="entry name" value="Globins"/>
    <property type="match status" value="1"/>
</dbReference>
<dbReference type="InterPro" id="IPR000971">
    <property type="entry name" value="Globin"/>
</dbReference>
<dbReference type="InterPro" id="IPR009050">
    <property type="entry name" value="Globin-like_sf"/>
</dbReference>
<dbReference type="InterPro" id="IPR012292">
    <property type="entry name" value="Globin/Proto"/>
</dbReference>
<dbReference type="InterPro" id="IPR012085">
    <property type="entry name" value="Globin_nematode"/>
</dbReference>
<dbReference type="InterPro" id="IPR044399">
    <property type="entry name" value="Mb-like_M"/>
</dbReference>
<dbReference type="Pfam" id="PF00042">
    <property type="entry name" value="Globin"/>
    <property type="match status" value="1"/>
</dbReference>
<dbReference type="PIRSF" id="PIRSF002026">
    <property type="entry name" value="Nematode_globin"/>
    <property type="match status" value="1"/>
</dbReference>
<dbReference type="SUPFAM" id="SSF46458">
    <property type="entry name" value="Globin-like"/>
    <property type="match status" value="1"/>
</dbReference>
<dbReference type="PROSITE" id="PS01033">
    <property type="entry name" value="GLOBIN"/>
    <property type="match status" value="1"/>
</dbReference>
<comment type="function">
    <text>High oxygen affinity. Probably supplies oxygen needed for muscle activity.</text>
</comment>
<comment type="subunit">
    <text>Homodimer; disulfide-linked.</text>
</comment>
<comment type="subcellular location">
    <subcellularLocation>
        <location>Cytoplasm</location>
    </subcellularLocation>
</comment>
<comment type="tissue specificity">
    <text>Body wall globin is localized in cellular compartments belonging to the hypodermis, the dorsal, ventral and lateral cords, the nerve ring, and body wall muscle.</text>
</comment>
<comment type="PTM">
    <text>The N-terminus is blocked.</text>
</comment>
<comment type="similarity">
    <text evidence="1">Belongs to the globin family.</text>
</comment>
<name>GLB2_ASCSU</name>
<feature type="chain" id="PRO_0000052460" description="Myoglobin">
    <location>
        <begin position="1"/>
        <end position="153"/>
    </location>
</feature>
<feature type="domain" description="Globin" evidence="1">
    <location>
        <begin position="1"/>
        <end position="147"/>
    </location>
</feature>
<feature type="binding site" description="proximal binding residue" evidence="1">
    <location>
        <position position="94"/>
    </location>
    <ligand>
        <name>heme b</name>
        <dbReference type="ChEBI" id="CHEBI:60344"/>
    </ligand>
    <ligandPart>
        <name>Fe</name>
        <dbReference type="ChEBI" id="CHEBI:18248"/>
    </ligandPart>
</feature>